<comment type="function">
    <text evidence="5">Oxidizes aldehydes to the corresponding carboxylic acids with a preference for aromatic aldehydes. It might play a role in the detoxification of aldehydes to avoid cell damage.</text>
</comment>
<comment type="catalytic activity">
    <reaction evidence="5 6">
        <text>an aldehyde + A + H2O = a carboxylate + AH2 + H(+)</text>
        <dbReference type="Rhea" id="RHEA:56856"/>
        <dbReference type="ChEBI" id="CHEBI:13193"/>
        <dbReference type="ChEBI" id="CHEBI:15377"/>
        <dbReference type="ChEBI" id="CHEBI:15378"/>
        <dbReference type="ChEBI" id="CHEBI:17478"/>
        <dbReference type="ChEBI" id="CHEBI:17499"/>
        <dbReference type="ChEBI" id="CHEBI:29067"/>
        <dbReference type="EC" id="1.2.99.6"/>
    </reaction>
</comment>
<comment type="cofactor">
    <cofactor evidence="5 8">
        <name>[2Fe-2S] cluster</name>
        <dbReference type="ChEBI" id="CHEBI:190135"/>
    </cofactor>
    <text evidence="8 11">Binds 2 [2Fe-2S] clusters.</text>
</comment>
<comment type="activity regulation">
    <text evidence="5">The complex requires PaoD for activity.</text>
</comment>
<comment type="subunit">
    <text evidence="5 7 8">Heterotrimer composed of PaoA, PaoB and PaoC.</text>
</comment>
<comment type="interaction">
    <interactant intactId="EBI-1115563">
        <id>P77165</id>
    </interactant>
    <interactant intactId="EBI-1129961">
        <id>P0AFM2</id>
        <label>proX</label>
    </interactant>
    <organismsDiffer>false</organismsDiffer>
    <experiments>2</experiments>
</comment>
<comment type="subcellular location">
    <subcellularLocation>
        <location evidence="11">Periplasm</location>
    </subcellularLocation>
</comment>
<comment type="PTM">
    <text evidence="4 10">Exported by the Tat system (PubMed:17218314). The position of the signal peptide cleavage has not been experimentally proven (Probable).</text>
</comment>
<comment type="disruption phenotype">
    <text evidence="5">Mutation results in complete impairment of cell growth in the presence of cinnamaldehyde.</text>
</comment>
<feature type="signal peptide" description="Tat-type signal" evidence="2">
    <location>
        <begin position="1"/>
        <end position="53"/>
    </location>
</feature>
<feature type="chain" id="PRO_0000189414" description="Aldehyde oxidoreductase iron-sulfur-binding subunit PaoA">
    <location>
        <begin position="54"/>
        <end position="229"/>
    </location>
</feature>
<feature type="domain" description="2Fe-2S ferredoxin-type" evidence="1">
    <location>
        <begin position="61"/>
        <end position="137"/>
    </location>
</feature>
<feature type="region of interest" description="Disordered" evidence="3">
    <location>
        <begin position="1"/>
        <end position="21"/>
    </location>
</feature>
<feature type="compositionally biased region" description="Basic and acidic residues" evidence="3">
    <location>
        <begin position="9"/>
        <end position="21"/>
    </location>
</feature>
<feature type="binding site" evidence="8 12 13">
    <location>
        <position position="99"/>
    </location>
    <ligand>
        <name>[2Fe-2S] cluster</name>
        <dbReference type="ChEBI" id="CHEBI:190135"/>
        <label>1</label>
    </ligand>
</feature>
<feature type="binding site" evidence="8 12 13">
    <location>
        <position position="104"/>
    </location>
    <ligand>
        <name>[2Fe-2S] cluster</name>
        <dbReference type="ChEBI" id="CHEBI:190135"/>
        <label>1</label>
    </ligand>
</feature>
<feature type="binding site" evidence="8 13">
    <location>
        <position position="105"/>
    </location>
    <ligand>
        <name>[2Fe-2S] cluster</name>
        <dbReference type="ChEBI" id="CHEBI:190135"/>
        <label>1</label>
    </ligand>
</feature>
<feature type="binding site" evidence="8 12 13">
    <location>
        <position position="107"/>
    </location>
    <ligand>
        <name>[2Fe-2S] cluster</name>
        <dbReference type="ChEBI" id="CHEBI:190135"/>
        <label>1</label>
    </ligand>
</feature>
<feature type="binding site" evidence="8 12 13">
    <location>
        <position position="119"/>
    </location>
    <ligand>
        <name>[2Fe-2S] cluster</name>
        <dbReference type="ChEBI" id="CHEBI:190135"/>
        <label>1</label>
    </ligand>
</feature>
<feature type="binding site" evidence="8 12 13">
    <location>
        <position position="158"/>
    </location>
    <ligand>
        <name>[2Fe-2S] cluster</name>
        <dbReference type="ChEBI" id="CHEBI:190135"/>
        <label>2</label>
    </ligand>
</feature>
<feature type="binding site" evidence="8 12 13">
    <location>
        <position position="161"/>
    </location>
    <ligand>
        <name>[2Fe-2S] cluster</name>
        <dbReference type="ChEBI" id="CHEBI:190135"/>
        <label>2</label>
    </ligand>
</feature>
<feature type="binding site" evidence="8 12 13">
    <location>
        <position position="208"/>
    </location>
    <ligand>
        <name>[2Fe-2S] cluster</name>
        <dbReference type="ChEBI" id="CHEBI:190135"/>
        <label>2</label>
    </ligand>
</feature>
<feature type="binding site" evidence="8 12 13">
    <location>
        <position position="210"/>
    </location>
    <ligand>
        <name>[2Fe-2S] cluster</name>
        <dbReference type="ChEBI" id="CHEBI:190135"/>
        <label>2</label>
    </ligand>
</feature>
<feature type="strand" evidence="14">
    <location>
        <begin position="60"/>
        <end position="67"/>
    </location>
</feature>
<feature type="strand" evidence="14">
    <location>
        <begin position="70"/>
        <end position="77"/>
    </location>
</feature>
<feature type="helix" evidence="14">
    <location>
        <begin position="82"/>
        <end position="88"/>
    </location>
</feature>
<feature type="strand" evidence="14">
    <location>
        <begin position="100"/>
        <end position="104"/>
    </location>
</feature>
<feature type="strand" evidence="14">
    <location>
        <begin position="108"/>
        <end position="111"/>
    </location>
</feature>
<feature type="strand" evidence="14">
    <location>
        <begin position="114"/>
        <end position="117"/>
    </location>
</feature>
<feature type="helix" evidence="14">
    <location>
        <begin position="118"/>
        <end position="120"/>
    </location>
</feature>
<feature type="helix" evidence="14">
    <location>
        <begin position="123"/>
        <end position="126"/>
    </location>
</feature>
<feature type="strand" evidence="14">
    <location>
        <begin position="130"/>
        <end position="132"/>
    </location>
</feature>
<feature type="helix" evidence="14">
    <location>
        <begin position="134"/>
        <end position="137"/>
    </location>
</feature>
<feature type="helix" evidence="14">
    <location>
        <begin position="145"/>
        <end position="153"/>
    </location>
</feature>
<feature type="strand" evidence="14">
    <location>
        <begin position="157"/>
        <end position="159"/>
    </location>
</feature>
<feature type="helix" evidence="14">
    <location>
        <begin position="162"/>
        <end position="177"/>
    </location>
</feature>
<feature type="strand" evidence="15">
    <location>
        <begin position="186"/>
        <end position="190"/>
    </location>
</feature>
<feature type="helix" evidence="14">
    <location>
        <begin position="196"/>
        <end position="202"/>
    </location>
</feature>
<feature type="turn" evidence="14">
    <location>
        <begin position="203"/>
        <end position="205"/>
    </location>
</feature>
<feature type="helix" evidence="14">
    <location>
        <begin position="213"/>
        <end position="225"/>
    </location>
</feature>
<name>PAOA_ECOLI</name>
<keyword id="KW-0001">2Fe-2S</keyword>
<keyword id="KW-0002">3D-structure</keyword>
<keyword id="KW-0408">Iron</keyword>
<keyword id="KW-0411">Iron-sulfur</keyword>
<keyword id="KW-0479">Metal-binding</keyword>
<keyword id="KW-0560">Oxidoreductase</keyword>
<keyword id="KW-0574">Periplasm</keyword>
<keyword id="KW-1185">Reference proteome</keyword>
<keyword id="KW-0732">Signal</keyword>
<proteinExistence type="evidence at protein level"/>
<gene>
    <name evidence="9" type="primary">paoA</name>
    <name type="synonym">yagT</name>
    <name type="ordered locus">b0286</name>
    <name type="ordered locus">JW0280</name>
</gene>
<protein>
    <recommendedName>
        <fullName evidence="10">Aldehyde oxidoreductase iron-sulfur-binding subunit PaoA</fullName>
        <ecNumber evidence="5 6">1.2.99.6</ecNumber>
    </recommendedName>
</protein>
<sequence length="229" mass="24343">MSNQGEYPEDNRVGKHEPHDLSLTRRDLIKVSAATAATAVVYPHSTLAASVPAATPAPEIMPLTLKVNGKTEQLEVDTRTTLLDTLRENLHLIGTKKGCDHGQCGACTVLVNGRRLNACLTLAVMHQGAEITTIEGLGSPDNLHPMQAAFIKHDGFQCGYCTSGQICSSVAVLKEIQDGIPSHVTVDLVSAPETTADEIRERMSGNICRCGAYANILAAIEDAAGEIKS</sequence>
<evidence type="ECO:0000255" key="1">
    <source>
        <dbReference type="PROSITE-ProRule" id="PRU00465"/>
    </source>
</evidence>
<evidence type="ECO:0000255" key="2">
    <source>
        <dbReference type="PROSITE-ProRule" id="PRU00648"/>
    </source>
</evidence>
<evidence type="ECO:0000256" key="3">
    <source>
        <dbReference type="SAM" id="MobiDB-lite"/>
    </source>
</evidence>
<evidence type="ECO:0000269" key="4">
    <source>
    </source>
</evidence>
<evidence type="ECO:0000269" key="5">
    <source>
    </source>
</evidence>
<evidence type="ECO:0000269" key="6">
    <source>
    </source>
</evidence>
<evidence type="ECO:0000269" key="7">
    <source>
    </source>
</evidence>
<evidence type="ECO:0000269" key="8">
    <source>
    </source>
</evidence>
<evidence type="ECO:0000303" key="9">
    <source>
    </source>
</evidence>
<evidence type="ECO:0000305" key="10"/>
<evidence type="ECO:0000305" key="11">
    <source>
    </source>
</evidence>
<evidence type="ECO:0007744" key="12">
    <source>
        <dbReference type="PDB" id="5G5G"/>
    </source>
</evidence>
<evidence type="ECO:0007744" key="13">
    <source>
        <dbReference type="PDB" id="5G5H"/>
    </source>
</evidence>
<evidence type="ECO:0007829" key="14">
    <source>
        <dbReference type="PDB" id="5G5G"/>
    </source>
</evidence>
<evidence type="ECO:0007829" key="15">
    <source>
        <dbReference type="PDB" id="5G5H"/>
    </source>
</evidence>
<reference key="1">
    <citation type="submission" date="1997-01" db="EMBL/GenBank/DDBJ databases">
        <title>Sequence of minutes 4-25 of Escherichia coli.</title>
        <authorList>
            <person name="Chung E."/>
            <person name="Allen E."/>
            <person name="Araujo R."/>
            <person name="Aparicio A.M."/>
            <person name="Davis K."/>
            <person name="Duncan M."/>
            <person name="Federspiel N."/>
            <person name="Hyman R."/>
            <person name="Kalman S."/>
            <person name="Komp C."/>
            <person name="Kurdi O."/>
            <person name="Lew H."/>
            <person name="Lin D."/>
            <person name="Namath A."/>
            <person name="Oefner P."/>
            <person name="Roberts D."/>
            <person name="Schramm S."/>
            <person name="Davis R.W."/>
        </authorList>
    </citation>
    <scope>NUCLEOTIDE SEQUENCE [LARGE SCALE GENOMIC DNA]</scope>
    <source>
        <strain>K12 / MG1655 / ATCC 47076</strain>
    </source>
</reference>
<reference key="2">
    <citation type="journal article" date="1997" name="Science">
        <title>The complete genome sequence of Escherichia coli K-12.</title>
        <authorList>
            <person name="Blattner F.R."/>
            <person name="Plunkett G. III"/>
            <person name="Bloch C.A."/>
            <person name="Perna N.T."/>
            <person name="Burland V."/>
            <person name="Riley M."/>
            <person name="Collado-Vides J."/>
            <person name="Glasner J.D."/>
            <person name="Rode C.K."/>
            <person name="Mayhew G.F."/>
            <person name="Gregor J."/>
            <person name="Davis N.W."/>
            <person name="Kirkpatrick H.A."/>
            <person name="Goeden M.A."/>
            <person name="Rose D.J."/>
            <person name="Mau B."/>
            <person name="Shao Y."/>
        </authorList>
    </citation>
    <scope>NUCLEOTIDE SEQUENCE [LARGE SCALE GENOMIC DNA]</scope>
    <source>
        <strain>K12 / MG1655 / ATCC 47076</strain>
    </source>
</reference>
<reference key="3">
    <citation type="journal article" date="2006" name="Mol. Syst. Biol.">
        <title>Highly accurate genome sequences of Escherichia coli K-12 strains MG1655 and W3110.</title>
        <authorList>
            <person name="Hayashi K."/>
            <person name="Morooka N."/>
            <person name="Yamamoto Y."/>
            <person name="Fujita K."/>
            <person name="Isono K."/>
            <person name="Choi S."/>
            <person name="Ohtsubo E."/>
            <person name="Baba T."/>
            <person name="Wanner B.L."/>
            <person name="Mori H."/>
            <person name="Horiuchi T."/>
        </authorList>
    </citation>
    <scope>NUCLEOTIDE SEQUENCE [LARGE SCALE GENOMIC DNA]</scope>
    <source>
        <strain>K12 / W3110 / ATCC 27325 / DSM 5911</strain>
    </source>
</reference>
<reference key="4">
    <citation type="journal article" date="2007" name="J. Biol. Chem.">
        <title>Export pathway selectivity of Escherichia coli twin arginine translocation signal peptides.</title>
        <authorList>
            <person name="Tullman-Ercek D."/>
            <person name="DeLisa M.P."/>
            <person name="Kawarasaki Y."/>
            <person name="Iranpour P."/>
            <person name="Ribnicky B."/>
            <person name="Palmer T."/>
            <person name="Georgiou G."/>
        </authorList>
    </citation>
    <scope>EXPORT VIA THE TAT-SYSTEM</scope>
</reference>
<reference key="5">
    <citation type="journal article" date="2009" name="FEBS J.">
        <title>A periplasmic aldehyde oxidoreductase represents the first molybdopterin cytosine dinucleotide cofactor containing molybdo-flavoenzyme from Escherichia coli.</title>
        <authorList>
            <person name="Neumann M."/>
            <person name="Mittelstaedt G."/>
            <person name="Iobbi-Nivol C."/>
            <person name="Saggu M."/>
            <person name="Lendzian F."/>
            <person name="Hildebrandt P."/>
            <person name="Leimkuehler S."/>
        </authorList>
    </citation>
    <scope>FUNCTION</scope>
    <scope>CATALYTIC ACTIVITY</scope>
    <scope>COFACTOR</scope>
    <scope>ACTIVITY REGULATION</scope>
    <scope>SUBUNIT</scope>
    <scope>SUBCELLULAR LOCATION</scope>
    <scope>DISRUPTION PHENOTYPE</scope>
</reference>
<reference key="6">
    <citation type="journal article" date="2011" name="J. Biol. Chem.">
        <title>Molybdopterin dinucleotide biosynthesis in Escherichia coli: identification of amino acid residues of molybdopterin dinucleotide transferases that determine specificity for binding of guanine or cytosine nucleotides.</title>
        <authorList>
            <person name="Neumann M."/>
            <person name="Seduk F."/>
            <person name="Iobbi-Nivol C."/>
            <person name="Leimkuhler S."/>
        </authorList>
    </citation>
    <scope>CATALYTIC ACTIVITY</scope>
    <scope>NOMENCLATURE</scope>
</reference>
<reference key="7">
    <citation type="journal article" date="2014" name="Int. J. Mol. Sci.">
        <title>Structural data on the periplasmic aldehyde oxidoreductase PaoABC from Escherichia coli: SAXS and preliminary X-ray crystallography analysis.</title>
        <authorList>
            <person name="Otrelo-Cardoso A.R."/>
            <person name="da Silva Correia M.A."/>
            <person name="Schwuchow V."/>
            <person name="Svergun D.I."/>
            <person name="Romao M.J."/>
            <person name="Leimkuehler S."/>
            <person name="Santos-Silva T."/>
        </authorList>
    </citation>
    <scope>CRYSTALLIZATION</scope>
    <scope>SUBUNIT</scope>
</reference>
<reference evidence="12 13" key="8">
    <citation type="journal article" date="2016" name="ACS Chem. Biol.">
        <title>The Escherichia coli periplasmic aldehyde oxidoreductase is an exceptional member of the xanthine oxidase family of molybdoenzymes.</title>
        <authorList>
            <person name="Correia M.A."/>
            <person name="Otrelo-Cardoso A.R."/>
            <person name="Schwuchow V."/>
            <person name="Sigfridsson Clauss K.G."/>
            <person name="Haumann M."/>
            <person name="Romao M.J."/>
            <person name="Leimkuhler S."/>
            <person name="Santos-Silva T."/>
        </authorList>
    </citation>
    <scope>X-RAY CRYSTALLOGRAPHY (1.70 ANGSTROMS) IN COMPLEX WITH IRON-SULFUR (2FE-2S)</scope>
    <scope>COFACTOR</scope>
    <scope>SUBUNIT</scope>
</reference>
<accession>P77165</accession>
<accession>Q2MCD6</accession>
<organism>
    <name type="scientific">Escherichia coli (strain K12)</name>
    <dbReference type="NCBI Taxonomy" id="83333"/>
    <lineage>
        <taxon>Bacteria</taxon>
        <taxon>Pseudomonadati</taxon>
        <taxon>Pseudomonadota</taxon>
        <taxon>Gammaproteobacteria</taxon>
        <taxon>Enterobacterales</taxon>
        <taxon>Enterobacteriaceae</taxon>
        <taxon>Escherichia</taxon>
    </lineage>
</organism>
<dbReference type="EC" id="1.2.99.6" evidence="5 6"/>
<dbReference type="EMBL" id="U73857">
    <property type="protein sequence ID" value="AAB18015.1"/>
    <property type="molecule type" value="Genomic_DNA"/>
</dbReference>
<dbReference type="EMBL" id="U00096">
    <property type="protein sequence ID" value="AAC73389.1"/>
    <property type="molecule type" value="Genomic_DNA"/>
</dbReference>
<dbReference type="EMBL" id="AP009048">
    <property type="protein sequence ID" value="BAE76070.1"/>
    <property type="molecule type" value="Genomic_DNA"/>
</dbReference>
<dbReference type="PIR" id="F64754">
    <property type="entry name" value="F64754"/>
</dbReference>
<dbReference type="RefSeq" id="NP_414820.1">
    <property type="nucleotide sequence ID" value="NC_000913.3"/>
</dbReference>
<dbReference type="RefSeq" id="WP_000070700.1">
    <property type="nucleotide sequence ID" value="NZ_SSZK01000048.1"/>
</dbReference>
<dbReference type="PDB" id="5G5G">
    <property type="method" value="X-ray"/>
    <property type="resolution" value="1.70 A"/>
    <property type="chains" value="A=1-229"/>
</dbReference>
<dbReference type="PDB" id="5G5H">
    <property type="method" value="X-ray"/>
    <property type="resolution" value="2.30 A"/>
    <property type="chains" value="A=1-229"/>
</dbReference>
<dbReference type="PDBsum" id="5G5G"/>
<dbReference type="PDBsum" id="5G5H"/>
<dbReference type="SMR" id="P77165"/>
<dbReference type="BioGRID" id="4259786">
    <property type="interactions" value="14"/>
</dbReference>
<dbReference type="BioGRID" id="849706">
    <property type="interactions" value="3"/>
</dbReference>
<dbReference type="ComplexPortal" id="CPX-4281">
    <property type="entry name" value="PaoABC periplasmic aldehyde oxidoreductase"/>
</dbReference>
<dbReference type="FunCoup" id="P77165">
    <property type="interactions" value="149"/>
</dbReference>
<dbReference type="IntAct" id="P77165">
    <property type="interactions" value="12"/>
</dbReference>
<dbReference type="STRING" id="511145.b0286"/>
<dbReference type="jPOST" id="P77165"/>
<dbReference type="PaxDb" id="511145-b0286"/>
<dbReference type="EnsemblBacteria" id="AAC73389">
    <property type="protein sequence ID" value="AAC73389"/>
    <property type="gene ID" value="b0286"/>
</dbReference>
<dbReference type="GeneID" id="945330"/>
<dbReference type="KEGG" id="ecj:JW0280"/>
<dbReference type="KEGG" id="eco:b0286"/>
<dbReference type="KEGG" id="ecoc:C3026_01395"/>
<dbReference type="KEGG" id="ecoc:C3026_24030"/>
<dbReference type="PATRIC" id="fig|1411691.4.peg.1992"/>
<dbReference type="EchoBASE" id="EB3329"/>
<dbReference type="eggNOG" id="COG2080">
    <property type="taxonomic scope" value="Bacteria"/>
</dbReference>
<dbReference type="HOGENOM" id="CLU_052511_1_0_6"/>
<dbReference type="InParanoid" id="P77165"/>
<dbReference type="OMA" id="RCTGYGG"/>
<dbReference type="OrthoDB" id="9775084at2"/>
<dbReference type="PhylomeDB" id="P77165"/>
<dbReference type="BioCyc" id="EcoCyc:G6157-MONOMER"/>
<dbReference type="BioCyc" id="MetaCyc:G6157-MONOMER"/>
<dbReference type="BRENDA" id="1.17.1.4">
    <property type="organism ID" value="2026"/>
</dbReference>
<dbReference type="PRO" id="PR:P77165"/>
<dbReference type="Proteomes" id="UP000000625">
    <property type="component" value="Chromosome"/>
</dbReference>
<dbReference type="GO" id="GO:0030288">
    <property type="term" value="C:outer membrane-bounded periplasmic space"/>
    <property type="evidence" value="ECO:0000314"/>
    <property type="project" value="EcoCyc"/>
</dbReference>
<dbReference type="GO" id="GO:1990204">
    <property type="term" value="C:oxidoreductase complex"/>
    <property type="evidence" value="ECO:0000353"/>
    <property type="project" value="ComplexPortal"/>
</dbReference>
<dbReference type="GO" id="GO:0042597">
    <property type="term" value="C:periplasmic space"/>
    <property type="evidence" value="ECO:0000318"/>
    <property type="project" value="GO_Central"/>
</dbReference>
<dbReference type="GO" id="GO:0051537">
    <property type="term" value="F:2 iron, 2 sulfur cluster binding"/>
    <property type="evidence" value="ECO:0000314"/>
    <property type="project" value="EcoCyc"/>
</dbReference>
<dbReference type="GO" id="GO:0047770">
    <property type="term" value="F:carboxylate reductase activity"/>
    <property type="evidence" value="ECO:0007669"/>
    <property type="project" value="UniProtKB-EC"/>
</dbReference>
<dbReference type="GO" id="GO:0046872">
    <property type="term" value="F:metal ion binding"/>
    <property type="evidence" value="ECO:0007669"/>
    <property type="project" value="UniProtKB-KW"/>
</dbReference>
<dbReference type="GO" id="GO:0016903">
    <property type="term" value="F:oxidoreductase activity, acting on the aldehyde or oxo group of donors"/>
    <property type="evidence" value="ECO:0000314"/>
    <property type="project" value="EcoCyc"/>
</dbReference>
<dbReference type="GO" id="GO:0009056">
    <property type="term" value="P:catabolic process"/>
    <property type="evidence" value="ECO:0000314"/>
    <property type="project" value="ComplexPortal"/>
</dbReference>
<dbReference type="GO" id="GO:0110095">
    <property type="term" value="P:cellular detoxification of aldehyde"/>
    <property type="evidence" value="ECO:0000314"/>
    <property type="project" value="ComplexPortal"/>
</dbReference>
<dbReference type="CDD" id="cd00207">
    <property type="entry name" value="fer2"/>
    <property type="match status" value="1"/>
</dbReference>
<dbReference type="FunFam" id="1.10.150.120:FF:000005">
    <property type="entry name" value="Aldehyde dehydrogenase iron-sulfur subunit"/>
    <property type="match status" value="1"/>
</dbReference>
<dbReference type="FunFam" id="3.10.20.30:FF:000020">
    <property type="entry name" value="Xanthine dehydrogenase iron-sulfur subunit"/>
    <property type="match status" value="1"/>
</dbReference>
<dbReference type="Gene3D" id="3.10.20.30">
    <property type="match status" value="1"/>
</dbReference>
<dbReference type="Gene3D" id="1.10.150.120">
    <property type="entry name" value="[2Fe-2S]-binding domain"/>
    <property type="match status" value="1"/>
</dbReference>
<dbReference type="InterPro" id="IPR002888">
    <property type="entry name" value="2Fe-2S-bd"/>
</dbReference>
<dbReference type="InterPro" id="IPR036884">
    <property type="entry name" value="2Fe-2S-bd_dom_sf"/>
</dbReference>
<dbReference type="InterPro" id="IPR036010">
    <property type="entry name" value="2Fe-2S_ferredoxin-like_sf"/>
</dbReference>
<dbReference type="InterPro" id="IPR001041">
    <property type="entry name" value="2Fe-2S_ferredoxin-type"/>
</dbReference>
<dbReference type="InterPro" id="IPR006058">
    <property type="entry name" value="2Fe2S_fd_BS"/>
</dbReference>
<dbReference type="InterPro" id="IPR052914">
    <property type="entry name" value="Aldehyde_Oxdr_Iron-Sulfur"/>
</dbReference>
<dbReference type="InterPro" id="IPR012675">
    <property type="entry name" value="Beta-grasp_dom_sf"/>
</dbReference>
<dbReference type="InterPro" id="IPR006311">
    <property type="entry name" value="TAT_signal"/>
</dbReference>
<dbReference type="NCBIfam" id="NF008514">
    <property type="entry name" value="PRK11433.1"/>
    <property type="match status" value="1"/>
</dbReference>
<dbReference type="PANTHER" id="PTHR45331:SF1">
    <property type="entry name" value="ALDEHYDE OXIDOREDUCTASE IRON-SULFUR-BINDING SUBUNIT PAOA"/>
    <property type="match status" value="1"/>
</dbReference>
<dbReference type="PANTHER" id="PTHR45331">
    <property type="entry name" value="OXIDOREDUCTASE, IRON-SULPHUR BINDING SUBUNIT-RELATED-RELATED"/>
    <property type="match status" value="1"/>
</dbReference>
<dbReference type="Pfam" id="PF00111">
    <property type="entry name" value="Fer2"/>
    <property type="match status" value="1"/>
</dbReference>
<dbReference type="Pfam" id="PF01799">
    <property type="entry name" value="Fer2_2"/>
    <property type="match status" value="1"/>
</dbReference>
<dbReference type="SUPFAM" id="SSF54292">
    <property type="entry name" value="2Fe-2S ferredoxin-like"/>
    <property type="match status" value="1"/>
</dbReference>
<dbReference type="SUPFAM" id="SSF47741">
    <property type="entry name" value="CO dehydrogenase ISP C-domain like"/>
    <property type="match status" value="1"/>
</dbReference>
<dbReference type="PROSITE" id="PS00197">
    <property type="entry name" value="2FE2S_FER_1"/>
    <property type="match status" value="1"/>
</dbReference>
<dbReference type="PROSITE" id="PS51085">
    <property type="entry name" value="2FE2S_FER_2"/>
    <property type="match status" value="1"/>
</dbReference>
<dbReference type="PROSITE" id="PS51318">
    <property type="entry name" value="TAT"/>
    <property type="match status" value="1"/>
</dbReference>